<comment type="function">
    <text evidence="1">Catalyzes the condensation of pantoate with beta-alanine in an ATP-dependent reaction via a pantoyl-adenylate intermediate.</text>
</comment>
<comment type="catalytic activity">
    <reaction evidence="1">
        <text>(R)-pantoate + beta-alanine + ATP = (R)-pantothenate + AMP + diphosphate + H(+)</text>
        <dbReference type="Rhea" id="RHEA:10912"/>
        <dbReference type="ChEBI" id="CHEBI:15378"/>
        <dbReference type="ChEBI" id="CHEBI:15980"/>
        <dbReference type="ChEBI" id="CHEBI:29032"/>
        <dbReference type="ChEBI" id="CHEBI:30616"/>
        <dbReference type="ChEBI" id="CHEBI:33019"/>
        <dbReference type="ChEBI" id="CHEBI:57966"/>
        <dbReference type="ChEBI" id="CHEBI:456215"/>
        <dbReference type="EC" id="6.3.2.1"/>
    </reaction>
</comment>
<comment type="pathway">
    <text evidence="1">Cofactor biosynthesis; (R)-pantothenate biosynthesis; (R)-pantothenate from (R)-pantoate and beta-alanine: step 1/1.</text>
</comment>
<comment type="subunit">
    <text evidence="1">Homodimer.</text>
</comment>
<comment type="subcellular location">
    <subcellularLocation>
        <location evidence="1">Cytoplasm</location>
    </subcellularLocation>
</comment>
<comment type="miscellaneous">
    <text evidence="1">The reaction proceeds by a bi uni uni bi ping pong mechanism.</text>
</comment>
<comment type="similarity">
    <text evidence="1">Belongs to the pantothenate synthetase family.</text>
</comment>
<feature type="chain" id="PRO_0000305520" description="Pantothenate synthetase">
    <location>
        <begin position="1"/>
        <end position="287"/>
    </location>
</feature>
<feature type="active site" description="Proton donor" evidence="1">
    <location>
        <position position="37"/>
    </location>
</feature>
<feature type="binding site" evidence="1">
    <location>
        <begin position="30"/>
        <end position="37"/>
    </location>
    <ligand>
        <name>ATP</name>
        <dbReference type="ChEBI" id="CHEBI:30616"/>
    </ligand>
</feature>
<feature type="binding site" evidence="1">
    <location>
        <position position="61"/>
    </location>
    <ligand>
        <name>(R)-pantoate</name>
        <dbReference type="ChEBI" id="CHEBI:15980"/>
    </ligand>
</feature>
<feature type="binding site" evidence="1">
    <location>
        <position position="61"/>
    </location>
    <ligand>
        <name>beta-alanine</name>
        <dbReference type="ChEBI" id="CHEBI:57966"/>
    </ligand>
</feature>
<feature type="binding site" evidence="1">
    <location>
        <begin position="148"/>
        <end position="151"/>
    </location>
    <ligand>
        <name>ATP</name>
        <dbReference type="ChEBI" id="CHEBI:30616"/>
    </ligand>
</feature>
<feature type="binding site" evidence="1">
    <location>
        <position position="154"/>
    </location>
    <ligand>
        <name>(R)-pantoate</name>
        <dbReference type="ChEBI" id="CHEBI:15980"/>
    </ligand>
</feature>
<feature type="binding site" evidence="1">
    <location>
        <position position="177"/>
    </location>
    <ligand>
        <name>ATP</name>
        <dbReference type="ChEBI" id="CHEBI:30616"/>
    </ligand>
</feature>
<feature type="binding site" evidence="1">
    <location>
        <begin position="185"/>
        <end position="188"/>
    </location>
    <ligand>
        <name>ATP</name>
        <dbReference type="ChEBI" id="CHEBI:30616"/>
    </ligand>
</feature>
<evidence type="ECO:0000255" key="1">
    <source>
        <dbReference type="HAMAP-Rule" id="MF_00158"/>
    </source>
</evidence>
<gene>
    <name evidence="1" type="primary">panC</name>
    <name type="ordered locus">Pcryo_0126</name>
</gene>
<name>PANC_PSYCK</name>
<protein>
    <recommendedName>
        <fullName evidence="1">Pantothenate synthetase</fullName>
        <shortName evidence="1">PS</shortName>
        <ecNumber evidence="1">6.3.2.1</ecNumber>
    </recommendedName>
    <alternativeName>
        <fullName evidence="1">Pantoate--beta-alanine ligase</fullName>
    </alternativeName>
    <alternativeName>
        <fullName evidence="1">Pantoate-activating enzyme</fullName>
    </alternativeName>
</protein>
<dbReference type="EC" id="6.3.2.1" evidence="1"/>
<dbReference type="EMBL" id="CP000323">
    <property type="protein sequence ID" value="ABE73910.1"/>
    <property type="molecule type" value="Genomic_DNA"/>
</dbReference>
<dbReference type="RefSeq" id="WP_011512501.1">
    <property type="nucleotide sequence ID" value="NC_007969.1"/>
</dbReference>
<dbReference type="SMR" id="Q1QEJ3"/>
<dbReference type="STRING" id="335284.Pcryo_0126"/>
<dbReference type="KEGG" id="pcr:Pcryo_0126"/>
<dbReference type="eggNOG" id="COG0414">
    <property type="taxonomic scope" value="Bacteria"/>
</dbReference>
<dbReference type="HOGENOM" id="CLU_047148_0_0_6"/>
<dbReference type="UniPathway" id="UPA00028">
    <property type="reaction ID" value="UER00005"/>
</dbReference>
<dbReference type="Proteomes" id="UP000002425">
    <property type="component" value="Chromosome"/>
</dbReference>
<dbReference type="GO" id="GO:0005829">
    <property type="term" value="C:cytosol"/>
    <property type="evidence" value="ECO:0007669"/>
    <property type="project" value="TreeGrafter"/>
</dbReference>
<dbReference type="GO" id="GO:0005524">
    <property type="term" value="F:ATP binding"/>
    <property type="evidence" value="ECO:0007669"/>
    <property type="project" value="UniProtKB-KW"/>
</dbReference>
<dbReference type="GO" id="GO:0004592">
    <property type="term" value="F:pantoate-beta-alanine ligase activity"/>
    <property type="evidence" value="ECO:0007669"/>
    <property type="project" value="UniProtKB-UniRule"/>
</dbReference>
<dbReference type="GO" id="GO:0015940">
    <property type="term" value="P:pantothenate biosynthetic process"/>
    <property type="evidence" value="ECO:0007669"/>
    <property type="project" value="UniProtKB-UniRule"/>
</dbReference>
<dbReference type="CDD" id="cd00560">
    <property type="entry name" value="PanC"/>
    <property type="match status" value="1"/>
</dbReference>
<dbReference type="FunFam" id="3.40.50.620:FF:000013">
    <property type="entry name" value="Pantothenate synthetase"/>
    <property type="match status" value="1"/>
</dbReference>
<dbReference type="Gene3D" id="3.40.50.620">
    <property type="entry name" value="HUPs"/>
    <property type="match status" value="1"/>
</dbReference>
<dbReference type="Gene3D" id="3.30.1300.10">
    <property type="entry name" value="Pantoate-beta-alanine ligase, C-terminal domain"/>
    <property type="match status" value="1"/>
</dbReference>
<dbReference type="HAMAP" id="MF_00158">
    <property type="entry name" value="PanC"/>
    <property type="match status" value="1"/>
</dbReference>
<dbReference type="InterPro" id="IPR004821">
    <property type="entry name" value="Cyt_trans-like"/>
</dbReference>
<dbReference type="InterPro" id="IPR003721">
    <property type="entry name" value="Pantoate_ligase"/>
</dbReference>
<dbReference type="InterPro" id="IPR042176">
    <property type="entry name" value="Pantoate_ligase_C"/>
</dbReference>
<dbReference type="InterPro" id="IPR014729">
    <property type="entry name" value="Rossmann-like_a/b/a_fold"/>
</dbReference>
<dbReference type="NCBIfam" id="TIGR00125">
    <property type="entry name" value="cyt_tran_rel"/>
    <property type="match status" value="1"/>
</dbReference>
<dbReference type="NCBIfam" id="TIGR00018">
    <property type="entry name" value="panC"/>
    <property type="match status" value="1"/>
</dbReference>
<dbReference type="PANTHER" id="PTHR21299">
    <property type="entry name" value="CYTIDYLATE KINASE/PANTOATE-BETA-ALANINE LIGASE"/>
    <property type="match status" value="1"/>
</dbReference>
<dbReference type="PANTHER" id="PTHR21299:SF1">
    <property type="entry name" value="PANTOATE--BETA-ALANINE LIGASE"/>
    <property type="match status" value="1"/>
</dbReference>
<dbReference type="Pfam" id="PF02569">
    <property type="entry name" value="Pantoate_ligase"/>
    <property type="match status" value="1"/>
</dbReference>
<dbReference type="SUPFAM" id="SSF52374">
    <property type="entry name" value="Nucleotidylyl transferase"/>
    <property type="match status" value="1"/>
</dbReference>
<organism>
    <name type="scientific">Psychrobacter cryohalolentis (strain ATCC BAA-1226 / DSM 17306 / VKM B-2378 / K5)</name>
    <dbReference type="NCBI Taxonomy" id="335284"/>
    <lineage>
        <taxon>Bacteria</taxon>
        <taxon>Pseudomonadati</taxon>
        <taxon>Pseudomonadota</taxon>
        <taxon>Gammaproteobacteria</taxon>
        <taxon>Moraxellales</taxon>
        <taxon>Moraxellaceae</taxon>
        <taxon>Psychrobacter</taxon>
    </lineage>
</organism>
<keyword id="KW-0067">ATP-binding</keyword>
<keyword id="KW-0963">Cytoplasm</keyword>
<keyword id="KW-0436">Ligase</keyword>
<keyword id="KW-0547">Nucleotide-binding</keyword>
<keyword id="KW-0566">Pantothenate biosynthesis</keyword>
<sequence>MPTIHYHISDLRVALRPYRTAQRIALVPTMGNLHDGHLELVKIAKQHADIVVVSIFVNPTQFGVGEDFDSYPRTLDEDVAKLAMVGADYVFAPTIDEMYPVLPPPTTILAGTITEQLCGKTRPNHFDGVGIVVSKLFNIVQPNIAVFGQKDYQQLAIIKQLVRDLSYSIDIIGAPIIRATDGLALSSRNQYLSESERQTAPILQQELQYSAKQISDNKQPLEVLLTAAHERITSAGFIIDYLEVKTTELTAVDDESINNHQDLVILVAAWLGRARLLDNRLVTINKV</sequence>
<accession>Q1QEJ3</accession>
<proteinExistence type="inferred from homology"/>
<reference key="1">
    <citation type="submission" date="2006-03" db="EMBL/GenBank/DDBJ databases">
        <title>Complete sequence of chromosome of Psychrobacter cryohalolentis K5.</title>
        <authorList>
            <consortium name="US DOE Joint Genome Institute"/>
            <person name="Copeland A."/>
            <person name="Lucas S."/>
            <person name="Lapidus A."/>
            <person name="Barry K."/>
            <person name="Detter J.C."/>
            <person name="Glavina T."/>
            <person name="Hammon N."/>
            <person name="Israni S."/>
            <person name="Dalin E."/>
            <person name="Tice H."/>
            <person name="Pitluck S."/>
            <person name="Brettin T."/>
            <person name="Bruce D."/>
            <person name="Han C."/>
            <person name="Tapia R."/>
            <person name="Sims D.R."/>
            <person name="Gilna P."/>
            <person name="Schmutz J."/>
            <person name="Larimer F."/>
            <person name="Land M."/>
            <person name="Hauser L."/>
            <person name="Kyrpides N."/>
            <person name="Kim E."/>
            <person name="Richardson P."/>
        </authorList>
    </citation>
    <scope>NUCLEOTIDE SEQUENCE [LARGE SCALE GENOMIC DNA]</scope>
    <source>
        <strain>ATCC BAA-1226 / DSM 17306 / VKM B-2378 / K5</strain>
    </source>
</reference>